<comment type="function">
    <text evidence="1">DNA-dependent RNA polymerase catalyzes the transcription of DNA into RNA using the four ribonucleoside triphosphates as substrates.</text>
</comment>
<comment type="catalytic activity">
    <reaction evidence="1">
        <text>RNA(n) + a ribonucleoside 5'-triphosphate = RNA(n+1) + diphosphate</text>
        <dbReference type="Rhea" id="RHEA:21248"/>
        <dbReference type="Rhea" id="RHEA-COMP:14527"/>
        <dbReference type="Rhea" id="RHEA-COMP:17342"/>
        <dbReference type="ChEBI" id="CHEBI:33019"/>
        <dbReference type="ChEBI" id="CHEBI:61557"/>
        <dbReference type="ChEBI" id="CHEBI:140395"/>
        <dbReference type="EC" id="2.7.7.6"/>
    </reaction>
</comment>
<comment type="subunit">
    <text evidence="1">The RNAP catalytic core consists of 2 alpha, 1 beta, 1 beta' and 1 omega subunit. When a sigma factor is associated with the core the holoenzyme is formed, which can initiate transcription.</text>
</comment>
<comment type="similarity">
    <text evidence="1">Belongs to the RNA polymerase beta chain family.</text>
</comment>
<organism>
    <name type="scientific">Pseudoalteromonas translucida (strain TAC 125)</name>
    <dbReference type="NCBI Taxonomy" id="326442"/>
    <lineage>
        <taxon>Bacteria</taxon>
        <taxon>Pseudomonadati</taxon>
        <taxon>Pseudomonadota</taxon>
        <taxon>Gammaproteobacteria</taxon>
        <taxon>Alteromonadales</taxon>
        <taxon>Pseudoalteromonadaceae</taxon>
        <taxon>Pseudoalteromonas</taxon>
    </lineage>
</organism>
<evidence type="ECO:0000255" key="1">
    <source>
        <dbReference type="HAMAP-Rule" id="MF_01321"/>
    </source>
</evidence>
<reference key="1">
    <citation type="journal article" date="2005" name="Genome Res.">
        <title>Coping with cold: the genome of the versatile marine Antarctica bacterium Pseudoalteromonas haloplanktis TAC125.</title>
        <authorList>
            <person name="Medigue C."/>
            <person name="Krin E."/>
            <person name="Pascal G."/>
            <person name="Barbe V."/>
            <person name="Bernsel A."/>
            <person name="Bertin P.N."/>
            <person name="Cheung F."/>
            <person name="Cruveiller S."/>
            <person name="D'Amico S."/>
            <person name="Duilio A."/>
            <person name="Fang G."/>
            <person name="Feller G."/>
            <person name="Ho C."/>
            <person name="Mangenot S."/>
            <person name="Marino G."/>
            <person name="Nilsson J."/>
            <person name="Parrilli E."/>
            <person name="Rocha E.P.C."/>
            <person name="Rouy Z."/>
            <person name="Sekowska A."/>
            <person name="Tutino M.L."/>
            <person name="Vallenet D."/>
            <person name="von Heijne G."/>
            <person name="Danchin A."/>
        </authorList>
    </citation>
    <scope>NUCLEOTIDE SEQUENCE [LARGE SCALE GENOMIC DNA]</scope>
    <source>
        <strain>TAC 125</strain>
    </source>
</reference>
<feature type="chain" id="PRO_0000224093" description="DNA-directed RNA polymerase subunit beta">
    <location>
        <begin position="1"/>
        <end position="1341"/>
    </location>
</feature>
<accession>Q3ILP9</accession>
<protein>
    <recommendedName>
        <fullName evidence="1">DNA-directed RNA polymerase subunit beta</fullName>
        <shortName evidence="1">RNAP subunit beta</shortName>
        <ecNumber evidence="1">2.7.7.6</ecNumber>
    </recommendedName>
    <alternativeName>
        <fullName evidence="1">RNA polymerase subunit beta</fullName>
    </alternativeName>
    <alternativeName>
        <fullName evidence="1">Transcriptase subunit beta</fullName>
    </alternativeName>
</protein>
<name>RPOB_PSET1</name>
<gene>
    <name evidence="1" type="primary">rpoB</name>
    <name type="ordered locus">PSHAa0222</name>
</gene>
<dbReference type="EC" id="2.7.7.6" evidence="1"/>
<dbReference type="EMBL" id="CR954246">
    <property type="protein sequence ID" value="CAI85325.1"/>
    <property type="molecule type" value="Genomic_DNA"/>
</dbReference>
<dbReference type="SMR" id="Q3ILP9"/>
<dbReference type="STRING" id="326442.PSHAa0222"/>
<dbReference type="KEGG" id="pha:PSHAa0222"/>
<dbReference type="PATRIC" id="fig|326442.8.peg.213"/>
<dbReference type="eggNOG" id="COG0085">
    <property type="taxonomic scope" value="Bacteria"/>
</dbReference>
<dbReference type="HOGENOM" id="CLU_000524_4_0_6"/>
<dbReference type="BioCyc" id="PHAL326442:PSHA_RS01095-MONOMER"/>
<dbReference type="Proteomes" id="UP000006843">
    <property type="component" value="Chromosome I"/>
</dbReference>
<dbReference type="GO" id="GO:0000428">
    <property type="term" value="C:DNA-directed RNA polymerase complex"/>
    <property type="evidence" value="ECO:0007669"/>
    <property type="project" value="UniProtKB-KW"/>
</dbReference>
<dbReference type="GO" id="GO:0003677">
    <property type="term" value="F:DNA binding"/>
    <property type="evidence" value="ECO:0007669"/>
    <property type="project" value="UniProtKB-UniRule"/>
</dbReference>
<dbReference type="GO" id="GO:0003899">
    <property type="term" value="F:DNA-directed RNA polymerase activity"/>
    <property type="evidence" value="ECO:0007669"/>
    <property type="project" value="UniProtKB-UniRule"/>
</dbReference>
<dbReference type="GO" id="GO:0032549">
    <property type="term" value="F:ribonucleoside binding"/>
    <property type="evidence" value="ECO:0007669"/>
    <property type="project" value="InterPro"/>
</dbReference>
<dbReference type="GO" id="GO:0006351">
    <property type="term" value="P:DNA-templated transcription"/>
    <property type="evidence" value="ECO:0007669"/>
    <property type="project" value="UniProtKB-UniRule"/>
</dbReference>
<dbReference type="CDD" id="cd00653">
    <property type="entry name" value="RNA_pol_B_RPB2"/>
    <property type="match status" value="1"/>
</dbReference>
<dbReference type="FunFam" id="2.40.270.10:FF:000004">
    <property type="entry name" value="DNA-directed RNA polymerase subunit beta"/>
    <property type="match status" value="1"/>
</dbReference>
<dbReference type="FunFam" id="2.40.50.100:FF:000006">
    <property type="entry name" value="DNA-directed RNA polymerase subunit beta"/>
    <property type="match status" value="1"/>
</dbReference>
<dbReference type="FunFam" id="2.40.50.150:FF:000001">
    <property type="entry name" value="DNA-directed RNA polymerase subunit beta"/>
    <property type="match status" value="1"/>
</dbReference>
<dbReference type="FunFam" id="3.90.1100.10:FF:000002">
    <property type="entry name" value="DNA-directed RNA polymerase subunit beta"/>
    <property type="match status" value="1"/>
</dbReference>
<dbReference type="FunFam" id="3.90.1110.10:FF:000001">
    <property type="entry name" value="DNA-directed RNA polymerase subunit beta"/>
    <property type="match status" value="1"/>
</dbReference>
<dbReference type="FunFam" id="3.90.1800.10:FF:000001">
    <property type="entry name" value="DNA-directed RNA polymerase subunit beta"/>
    <property type="match status" value="1"/>
</dbReference>
<dbReference type="Gene3D" id="2.40.50.100">
    <property type="match status" value="1"/>
</dbReference>
<dbReference type="Gene3D" id="2.40.50.150">
    <property type="match status" value="1"/>
</dbReference>
<dbReference type="Gene3D" id="3.90.1100.10">
    <property type="match status" value="2"/>
</dbReference>
<dbReference type="Gene3D" id="2.30.150.10">
    <property type="entry name" value="DNA-directed RNA polymerase, beta subunit, external 1 domain"/>
    <property type="match status" value="1"/>
</dbReference>
<dbReference type="Gene3D" id="2.40.270.10">
    <property type="entry name" value="DNA-directed RNA polymerase, subunit 2, domain 6"/>
    <property type="match status" value="1"/>
</dbReference>
<dbReference type="Gene3D" id="3.90.1800.10">
    <property type="entry name" value="RNA polymerase alpha subunit dimerisation domain"/>
    <property type="match status" value="1"/>
</dbReference>
<dbReference type="HAMAP" id="MF_01321">
    <property type="entry name" value="RNApol_bact_RpoB"/>
    <property type="match status" value="1"/>
</dbReference>
<dbReference type="InterPro" id="IPR042107">
    <property type="entry name" value="DNA-dir_RNA_pol_bsu_ext_1_sf"/>
</dbReference>
<dbReference type="InterPro" id="IPR019462">
    <property type="entry name" value="DNA-dir_RNA_pol_bsu_external_1"/>
</dbReference>
<dbReference type="InterPro" id="IPR015712">
    <property type="entry name" value="DNA-dir_RNA_pol_su2"/>
</dbReference>
<dbReference type="InterPro" id="IPR007120">
    <property type="entry name" value="DNA-dir_RNAP_su2_dom"/>
</dbReference>
<dbReference type="InterPro" id="IPR037033">
    <property type="entry name" value="DNA-dir_RNAP_su2_hyb_sf"/>
</dbReference>
<dbReference type="InterPro" id="IPR010243">
    <property type="entry name" value="RNA_pol_bsu_bac"/>
</dbReference>
<dbReference type="InterPro" id="IPR007121">
    <property type="entry name" value="RNA_pol_bsu_CS"/>
</dbReference>
<dbReference type="InterPro" id="IPR007644">
    <property type="entry name" value="RNA_pol_bsu_protrusion"/>
</dbReference>
<dbReference type="InterPro" id="IPR007642">
    <property type="entry name" value="RNA_pol_Rpb2_2"/>
</dbReference>
<dbReference type="InterPro" id="IPR007645">
    <property type="entry name" value="RNA_pol_Rpb2_3"/>
</dbReference>
<dbReference type="InterPro" id="IPR007641">
    <property type="entry name" value="RNA_pol_Rpb2_7"/>
</dbReference>
<dbReference type="InterPro" id="IPR014724">
    <property type="entry name" value="RNA_pol_RPB2_OB-fold"/>
</dbReference>
<dbReference type="NCBIfam" id="NF001616">
    <property type="entry name" value="PRK00405.1"/>
    <property type="match status" value="1"/>
</dbReference>
<dbReference type="NCBIfam" id="TIGR02013">
    <property type="entry name" value="rpoB"/>
    <property type="match status" value="1"/>
</dbReference>
<dbReference type="PANTHER" id="PTHR20856">
    <property type="entry name" value="DNA-DIRECTED RNA POLYMERASE I SUBUNIT 2"/>
    <property type="match status" value="1"/>
</dbReference>
<dbReference type="Pfam" id="PF04563">
    <property type="entry name" value="RNA_pol_Rpb2_1"/>
    <property type="match status" value="1"/>
</dbReference>
<dbReference type="Pfam" id="PF04561">
    <property type="entry name" value="RNA_pol_Rpb2_2"/>
    <property type="match status" value="2"/>
</dbReference>
<dbReference type="Pfam" id="PF04565">
    <property type="entry name" value="RNA_pol_Rpb2_3"/>
    <property type="match status" value="1"/>
</dbReference>
<dbReference type="Pfam" id="PF10385">
    <property type="entry name" value="RNA_pol_Rpb2_45"/>
    <property type="match status" value="1"/>
</dbReference>
<dbReference type="Pfam" id="PF00562">
    <property type="entry name" value="RNA_pol_Rpb2_6"/>
    <property type="match status" value="1"/>
</dbReference>
<dbReference type="Pfam" id="PF04560">
    <property type="entry name" value="RNA_pol_Rpb2_7"/>
    <property type="match status" value="1"/>
</dbReference>
<dbReference type="SUPFAM" id="SSF64484">
    <property type="entry name" value="beta and beta-prime subunits of DNA dependent RNA-polymerase"/>
    <property type="match status" value="1"/>
</dbReference>
<dbReference type="PROSITE" id="PS01166">
    <property type="entry name" value="RNA_POL_BETA"/>
    <property type="match status" value="1"/>
</dbReference>
<keyword id="KW-0240">DNA-directed RNA polymerase</keyword>
<keyword id="KW-0548">Nucleotidyltransferase</keyword>
<keyword id="KW-1185">Reference proteome</keyword>
<keyword id="KW-0804">Transcription</keyword>
<keyword id="KW-0808">Transferase</keyword>
<sequence length="1341" mass="149686">MAYSYSEKKRIRKDFGKRPQVLDIPFLLSTQLKSFKKFLVPDADGDHGLEAAFRSVFPIKSYSGNSELQYVSYRIGEPVFDVKECQIRGVTYSAPLRVKLRLVVMDKEAPGTVKDIKEQEVYMGEIPLMTDTGTFVINGTERVIVSQLHRSPGVFFDNDRGKTHSSGKVLYNARVIPYRGSWLDFEFDAKDNLYVRIDRRRKLPASIILRALEYSSEDILGIFFDNTTFEVTDGKVLMELVPSRLRGETAAFDIKSEDGEVFVESGRRVTARHIKNIEKKGIKQLEVPHEYIIGRVLAKNYVDESTGEVVANANDELTLELMAELVKAGHTKIDTLYINEVDSGAYMSNTLNIDSSSSRLEALVEIYRMMRPGEPPTKDAAEALFQNLFFSEERYDLSTVGRMKFNSRVGYDTDTGPGTLSKEDIVSVMKVLIAIRNGVGDVDDIDHLGNRRIRSVGEMAENQFRVGLVRVERAVRERLSLGDLDAIMPQDLINAKPISAAVKEFFGSSQLSQFMDQNNPLSEVTHKRRISALGPGGLTRERAGFEVRDVHVTHYGRVCPIETPEGPNIGLINSLSTYARTNDYGFLETPYRKVVDGVVTDEVDYLSAIEEGQFVIAQANSNLTETNEFVDELIPCRHKGESTFMGRMDQQYMDVSPQQVISVAAALIPFLEHDDANRALMGSNMQRQAVPTLKADKPLVGTGIELTLAKDSGVTIVAKRGGEVMYCDASRIVVNVHEEERVPGEAGIDIYNLTKYTRSNQNTCINQKPTCMVGEPVTRGDVLADGPSTDLGDLALGQNLRVAFMPWNGYNFEDSILLSERVVEEDRLTTIHIQELQCIARDTKLGSEEITADIPNVGESALGKLDESGVVYIGAEVKSGDILVGKVTPKGETQLTPEEKLLRAIFGEKASDVKDSSLRVPNSVTGTVIDVQVFTRDGVEKDKRALEVEEMQLRDAKKDFNEEFRILEAGVLDRARKLLIAAGFDEDKLALLNAEKLLTQSLAEEDKQAELEQLAAQYDELKAEYDKKFENKRRKITQGDDLAPGVLKIVKVYLAVKRCIQPGDKMAGRHGNKGVISTIVPVEDMPYDDKGRTVDIVLNPLGVPSRMNIGQILETHMGLAARGIGERIEEMMKEQRELHELRAFIKQAYEIGESRQVVDIDSFTDDEIRRLAENLKGGLPIATPAFDGAKENEIKDMLELAGYPRSGQVTLYDGRTGDQFERQVTVGYMYMLKLNHLVDDKMHARSTGSYSLVTQQPLGGKAQFGGQRFGEMEVWALEAYGAAYTLQEMLTVKSDDVNGRTKMYKNIVDGNHKMEPGMPESFNVLLKEIRSLGINIELEEN</sequence>
<proteinExistence type="inferred from homology"/>